<protein>
    <recommendedName>
        <fullName>Cytochrome c oxidase subunit 4B</fullName>
        <ecNumber>7.1.1.9</ecNumber>
    </recommendedName>
    <alternativeName>
        <fullName>Cytochrome aa3 subunit 4B</fullName>
    </alternativeName>
    <alternativeName>
        <fullName>Cytochrome c oxidase polypeptide IVB</fullName>
    </alternativeName>
</protein>
<dbReference type="EC" id="7.1.1.9"/>
<dbReference type="EMBL" id="D13955">
    <property type="protein sequence ID" value="BAA03048.1"/>
    <property type="molecule type" value="Genomic_DNA"/>
</dbReference>
<dbReference type="SMR" id="Q03440"/>
<dbReference type="GO" id="GO:0005886">
    <property type="term" value="C:plasma membrane"/>
    <property type="evidence" value="ECO:0007669"/>
    <property type="project" value="UniProtKB-SubCell"/>
</dbReference>
<dbReference type="GO" id="GO:0004129">
    <property type="term" value="F:cytochrome-c oxidase activity"/>
    <property type="evidence" value="ECO:0007669"/>
    <property type="project" value="UniProtKB-EC"/>
</dbReference>
<dbReference type="InterPro" id="IPR014257">
    <property type="entry name" value="Cyt_c_oxidase_su4_bacillaceae"/>
</dbReference>
<dbReference type="InterPro" id="IPR005171">
    <property type="entry name" value="Cyt_c_oxidase_su4_prok"/>
</dbReference>
<dbReference type="NCBIfam" id="TIGR02908">
    <property type="entry name" value="CoxD_Bacillus"/>
    <property type="match status" value="1"/>
</dbReference>
<dbReference type="Pfam" id="PF03626">
    <property type="entry name" value="COX4_pro"/>
    <property type="match status" value="1"/>
</dbReference>
<feature type="initiator methionine" description="Removed" evidence="2">
    <location>
        <position position="1"/>
    </location>
</feature>
<feature type="chain" id="PRO_0000183901" description="Cytochrome c oxidase subunit 4B">
    <location>
        <begin position="2"/>
        <end position="110"/>
    </location>
</feature>
<feature type="transmembrane region" description="Helical" evidence="1">
    <location>
        <begin position="29"/>
        <end position="49"/>
    </location>
</feature>
<feature type="transmembrane region" description="Helical" evidence="1">
    <location>
        <begin position="55"/>
        <end position="75"/>
    </location>
</feature>
<feature type="transmembrane region" description="Helical" evidence="1">
    <location>
        <begin position="89"/>
        <end position="109"/>
    </location>
</feature>
<sequence length="110" mass="12864">MANQTNSGNERVDLAYRRRKNAEEMRHQMIAFVLMILLTLIAFAAVGYEEFSHWFVVPFILLLAAVQVAFQLYYFMHMSHKGHEFPAMFIYGGVAVMLLLVWAFTTVVWW</sequence>
<evidence type="ECO:0000255" key="1"/>
<evidence type="ECO:0000269" key="2">
    <source>
    </source>
</evidence>
<evidence type="ECO:0000305" key="3"/>
<organism>
    <name type="scientific">Bacillus sp. (strain PS3)</name>
    <dbReference type="NCBI Taxonomy" id="2334"/>
    <lineage>
        <taxon>Bacteria</taxon>
        <taxon>Bacillati</taxon>
        <taxon>Bacillota</taxon>
        <taxon>Bacilli</taxon>
        <taxon>Bacillales</taxon>
        <taxon>Bacillaceae</taxon>
        <taxon>Bacillus</taxon>
    </lineage>
</organism>
<reference key="1">
    <citation type="journal article" date="1990" name="J. Biochem.">
        <title>Nucleotide sequence of the gene coding for four subunits of cytochrome c oxidase from the thermophilic bacterium PS3.</title>
        <authorList>
            <person name="Ishizuka M."/>
            <person name="Machida K."/>
            <person name="Shimada S."/>
            <person name="Mogi A."/>
            <person name="Tsuchiya T."/>
            <person name="Ohmori T."/>
            <person name="Souma Y."/>
            <person name="Gonda M."/>
            <person name="Sone N."/>
        </authorList>
    </citation>
    <scope>NUCLEOTIDE SEQUENCE [GENOMIC DNA]</scope>
    <scope>PROTEIN SEQUENCE OF 2-17</scope>
</reference>
<name>COX4_BACP3</name>
<gene>
    <name type="primary">caaD</name>
</gene>
<proteinExistence type="evidence at protein level"/>
<accession>Q03440</accession>
<keyword id="KW-1003">Cell membrane</keyword>
<keyword id="KW-0903">Direct protein sequencing</keyword>
<keyword id="KW-0472">Membrane</keyword>
<keyword id="KW-1278">Translocase</keyword>
<keyword id="KW-0812">Transmembrane</keyword>
<keyword id="KW-1133">Transmembrane helix</keyword>
<comment type="catalytic activity">
    <reaction>
        <text>4 Fe(II)-[cytochrome c] + O2 + 8 H(+)(in) = 4 Fe(III)-[cytochrome c] + 2 H2O + 4 H(+)(out)</text>
        <dbReference type="Rhea" id="RHEA:11436"/>
        <dbReference type="Rhea" id="RHEA-COMP:10350"/>
        <dbReference type="Rhea" id="RHEA-COMP:14399"/>
        <dbReference type="ChEBI" id="CHEBI:15377"/>
        <dbReference type="ChEBI" id="CHEBI:15378"/>
        <dbReference type="ChEBI" id="CHEBI:15379"/>
        <dbReference type="ChEBI" id="CHEBI:29033"/>
        <dbReference type="ChEBI" id="CHEBI:29034"/>
        <dbReference type="EC" id="7.1.1.9"/>
    </reaction>
</comment>
<comment type="subcellular location">
    <subcellularLocation>
        <location>Cell membrane</location>
        <topology>Multi-pass membrane protein</topology>
    </subcellularLocation>
</comment>
<comment type="similarity">
    <text evidence="3">Belongs to the cytochrome c oxidase bacterial subunit 4 family.</text>
</comment>